<reference key="1">
    <citation type="journal article" date="2003" name="Nucleic Acids Res.">
        <title>A comparison of three fission yeast mitochondrial genomes.</title>
        <authorList>
            <person name="Bullerwell C.E."/>
            <person name="Leigh J."/>
            <person name="Forget L."/>
            <person name="Lang B.F."/>
        </authorList>
    </citation>
    <scope>NUCLEOTIDE SEQUENCE [LARGE SCALE GENOMIC DNA]</scope>
</reference>
<evidence type="ECO:0000250" key="1"/>
<evidence type="ECO:0000250" key="2">
    <source>
        <dbReference type="UniProtKB" id="P00157"/>
    </source>
</evidence>
<evidence type="ECO:0000250" key="3">
    <source>
        <dbReference type="UniProtKB" id="P00163"/>
    </source>
</evidence>
<evidence type="ECO:0000255" key="4">
    <source>
        <dbReference type="PROSITE-ProRule" id="PRU00967"/>
    </source>
</evidence>
<evidence type="ECO:0000255" key="5">
    <source>
        <dbReference type="PROSITE-ProRule" id="PRU00968"/>
    </source>
</evidence>
<proteinExistence type="inferred from homology"/>
<organism>
    <name type="scientific">Schizosaccharomyces octosporus</name>
    <name type="common">Fission yeast</name>
    <name type="synonym">Octosporomyces octosporus</name>
    <dbReference type="NCBI Taxonomy" id="4899"/>
    <lineage>
        <taxon>Eukaryota</taxon>
        <taxon>Fungi</taxon>
        <taxon>Dikarya</taxon>
        <taxon>Ascomycota</taxon>
        <taxon>Taphrinomycotina</taxon>
        <taxon>Schizosaccharomycetes</taxon>
        <taxon>Schizosaccharomycetales</taxon>
        <taxon>Schizosaccharomycetaceae</taxon>
        <taxon>Schizosaccharomyces</taxon>
    </lineage>
</organism>
<geneLocation type="mitochondrion"/>
<protein>
    <recommendedName>
        <fullName>Cytochrome b</fullName>
    </recommendedName>
    <alternativeName>
        <fullName>Complex III subunit 3</fullName>
    </alternativeName>
    <alternativeName>
        <fullName>Complex III subunit III</fullName>
    </alternativeName>
    <alternativeName>
        <fullName>Cytochrome b-c1 complex subunit 3</fullName>
    </alternativeName>
    <alternativeName>
        <fullName>Ubiquinol-cytochrome-c reductase complex cytochrome b subunit</fullName>
    </alternativeName>
</protein>
<gene>
    <name type="primary">cob</name>
    <name type="synonym">cytb</name>
</gene>
<comment type="function">
    <text evidence="3">Component of the ubiquinol-cytochrome c reductase complex (complex III or cytochrome b-c1 complex) that is part of the mitochondrial respiratory chain. The b-c1 complex mediates electron transfer from ubiquinol to cytochrome c. Contributes to the generation of a proton gradient across the mitochondrial membrane that is then used for ATP synthesis.</text>
</comment>
<comment type="cofactor">
    <cofactor evidence="3">
        <name>heme b</name>
        <dbReference type="ChEBI" id="CHEBI:60344"/>
    </cofactor>
    <text evidence="3">Binds 2 heme b groups non-covalently.</text>
</comment>
<comment type="subunit">
    <text evidence="3">Fungal cytochrome b-c1 complex contains 10 subunits; 3 respiratory subunits, 2 core proteins and 5 low-molecular weight proteins. Cytochrome b-c1 complex is a homodimer.</text>
</comment>
<comment type="subcellular location">
    <subcellularLocation>
        <location evidence="3">Mitochondrion inner membrane</location>
        <topology evidence="3">Multi-pass membrane protein</topology>
    </subcellularLocation>
</comment>
<comment type="miscellaneous">
    <text evidence="1">Heme 1 (or BL or b562) is low-potential and absorbs at about 562 nm, and heme 2 (or BH or b566) is high-potential and absorbs at about 566 nm.</text>
</comment>
<comment type="similarity">
    <text evidence="4 5">Belongs to the cytochrome b family.</text>
</comment>
<comment type="caution">
    <text evidence="3">The protein contains only eight transmembrane helices, not nine as predicted by bioinformatics tools.</text>
</comment>
<accession>Q8HQ92</accession>
<sequence>MKFLKSNPFLALANNYMIDAPEPSNISYFWNFGSLLACVLVVQIVTGILLACFYVASMDLAFASVERIGRDVNYGFLLRALHANGASFFFIFLYLHIGRGLYYGSYRAPRTMTWNIGVIIFLLTIITAFLGYCLPANQMSFWGATVITNLLSAVPFIGDDLVQLLWGGFSVSNPTLNRFFSLHYLMPFVIAALSIMHLIALHTNGSSNPLGVTANMDRLPMNPYFLIKDLITIFIFLLAINYMVFYNPYGFMEPDCALPADPLKTPMSIVPEWYLLPYYAILRAIPNFQLGVVAMLLSILVLLLLPLLDFSAIRGNQFNPMGKFFFWCFVADFCILAWIGGSHPENVFITIGAYATAFYFIYFFILIPVYTILGNTLIDLGLPRSNK</sequence>
<feature type="chain" id="PRO_0000061761" description="Cytochrome b">
    <location>
        <begin position="1"/>
        <end position="387"/>
    </location>
</feature>
<feature type="transmembrane region" description="Helical" evidence="3">
    <location>
        <begin position="32"/>
        <end position="52"/>
    </location>
</feature>
<feature type="transmembrane region" description="Helical" evidence="3">
    <location>
        <begin position="76"/>
        <end position="98"/>
    </location>
</feature>
<feature type="transmembrane region" description="Helical" evidence="3">
    <location>
        <begin position="113"/>
        <end position="133"/>
    </location>
</feature>
<feature type="transmembrane region" description="Helical" evidence="3">
    <location>
        <begin position="179"/>
        <end position="199"/>
    </location>
</feature>
<feature type="transmembrane region" description="Helical" evidence="3">
    <location>
        <begin position="225"/>
        <end position="245"/>
    </location>
</feature>
<feature type="transmembrane region" description="Helical" evidence="3">
    <location>
        <begin position="289"/>
        <end position="309"/>
    </location>
</feature>
<feature type="transmembrane region" description="Helical" evidence="3">
    <location>
        <begin position="321"/>
        <end position="341"/>
    </location>
</feature>
<feature type="transmembrane region" description="Helical" evidence="3">
    <location>
        <begin position="348"/>
        <end position="368"/>
    </location>
</feature>
<feature type="binding site" description="axial binding residue" evidence="5">
    <location>
        <position position="82"/>
    </location>
    <ligand>
        <name>heme b</name>
        <dbReference type="ChEBI" id="CHEBI:60344"/>
        <label>b562</label>
    </ligand>
    <ligandPart>
        <name>Fe</name>
        <dbReference type="ChEBI" id="CHEBI:18248"/>
    </ligandPart>
</feature>
<feature type="binding site" description="axial binding residue" evidence="5">
    <location>
        <position position="96"/>
    </location>
    <ligand>
        <name>heme b</name>
        <dbReference type="ChEBI" id="CHEBI:60344"/>
        <label>b566</label>
    </ligand>
    <ligandPart>
        <name>Fe</name>
        <dbReference type="ChEBI" id="CHEBI:18248"/>
    </ligandPart>
</feature>
<feature type="binding site" description="axial binding residue" evidence="5">
    <location>
        <position position="183"/>
    </location>
    <ligand>
        <name>heme b</name>
        <dbReference type="ChEBI" id="CHEBI:60344"/>
        <label>b562</label>
    </ligand>
    <ligandPart>
        <name>Fe</name>
        <dbReference type="ChEBI" id="CHEBI:18248"/>
    </ligandPart>
</feature>
<feature type="binding site" description="axial binding residue" evidence="5">
    <location>
        <position position="197"/>
    </location>
    <ligand>
        <name>heme b</name>
        <dbReference type="ChEBI" id="CHEBI:60344"/>
        <label>b566</label>
    </ligand>
    <ligandPart>
        <name>Fe</name>
        <dbReference type="ChEBI" id="CHEBI:18248"/>
    </ligandPart>
</feature>
<feature type="binding site" evidence="2">
    <location>
        <position position="202"/>
    </location>
    <ligand>
        <name>a ubiquinone</name>
        <dbReference type="ChEBI" id="CHEBI:16389"/>
    </ligand>
</feature>
<dbReference type="EMBL" id="AF275271">
    <property type="protein sequence ID" value="AAN31937.1"/>
    <property type="molecule type" value="Genomic_DNA"/>
</dbReference>
<dbReference type="RefSeq" id="NP_700361.1">
    <property type="nucleotide sequence ID" value="NC_004312.1"/>
</dbReference>
<dbReference type="SMR" id="Q8HQ92"/>
<dbReference type="GeneID" id="805300"/>
<dbReference type="VEuPathDB" id="FungiDB:SOCG_7000006443049156"/>
<dbReference type="GO" id="GO:0005743">
    <property type="term" value="C:mitochondrial inner membrane"/>
    <property type="evidence" value="ECO:0007669"/>
    <property type="project" value="UniProtKB-SubCell"/>
</dbReference>
<dbReference type="GO" id="GO:0045275">
    <property type="term" value="C:respiratory chain complex III"/>
    <property type="evidence" value="ECO:0007669"/>
    <property type="project" value="InterPro"/>
</dbReference>
<dbReference type="GO" id="GO:0046872">
    <property type="term" value="F:metal ion binding"/>
    <property type="evidence" value="ECO:0007669"/>
    <property type="project" value="UniProtKB-KW"/>
</dbReference>
<dbReference type="GO" id="GO:0008121">
    <property type="term" value="F:ubiquinol-cytochrome-c reductase activity"/>
    <property type="evidence" value="ECO:0007669"/>
    <property type="project" value="InterPro"/>
</dbReference>
<dbReference type="GO" id="GO:0006122">
    <property type="term" value="P:mitochondrial electron transport, ubiquinol to cytochrome c"/>
    <property type="evidence" value="ECO:0007669"/>
    <property type="project" value="TreeGrafter"/>
</dbReference>
<dbReference type="CDD" id="cd00284">
    <property type="entry name" value="Cytochrome_b_N"/>
    <property type="match status" value="1"/>
</dbReference>
<dbReference type="Gene3D" id="1.20.810.10">
    <property type="entry name" value="Cytochrome Bc1 Complex, Chain C"/>
    <property type="match status" value="1"/>
</dbReference>
<dbReference type="InterPro" id="IPR005798">
    <property type="entry name" value="Cyt_b/b6_C"/>
</dbReference>
<dbReference type="InterPro" id="IPR036150">
    <property type="entry name" value="Cyt_b/b6_C_sf"/>
</dbReference>
<dbReference type="InterPro" id="IPR005797">
    <property type="entry name" value="Cyt_b/b6_N"/>
</dbReference>
<dbReference type="InterPro" id="IPR027387">
    <property type="entry name" value="Cytb/b6-like_sf"/>
</dbReference>
<dbReference type="InterPro" id="IPR030689">
    <property type="entry name" value="Cytochrome_b"/>
</dbReference>
<dbReference type="InterPro" id="IPR048259">
    <property type="entry name" value="Cytochrome_b_N_euk/bac"/>
</dbReference>
<dbReference type="InterPro" id="IPR016174">
    <property type="entry name" value="Di-haem_cyt_TM"/>
</dbReference>
<dbReference type="PANTHER" id="PTHR19271">
    <property type="entry name" value="CYTOCHROME B"/>
    <property type="match status" value="1"/>
</dbReference>
<dbReference type="PANTHER" id="PTHR19271:SF16">
    <property type="entry name" value="CYTOCHROME B"/>
    <property type="match status" value="1"/>
</dbReference>
<dbReference type="Pfam" id="PF00032">
    <property type="entry name" value="Cytochrom_B_C"/>
    <property type="match status" value="1"/>
</dbReference>
<dbReference type="Pfam" id="PF00033">
    <property type="entry name" value="Cytochrome_B"/>
    <property type="match status" value="1"/>
</dbReference>
<dbReference type="PIRSF" id="PIRSF038885">
    <property type="entry name" value="COB"/>
    <property type="match status" value="1"/>
</dbReference>
<dbReference type="SUPFAM" id="SSF81648">
    <property type="entry name" value="a domain/subunit of cytochrome bc1 complex (Ubiquinol-cytochrome c reductase)"/>
    <property type="match status" value="1"/>
</dbReference>
<dbReference type="SUPFAM" id="SSF81342">
    <property type="entry name" value="Transmembrane di-heme cytochromes"/>
    <property type="match status" value="1"/>
</dbReference>
<dbReference type="PROSITE" id="PS51003">
    <property type="entry name" value="CYTB_CTER"/>
    <property type="match status" value="1"/>
</dbReference>
<dbReference type="PROSITE" id="PS51002">
    <property type="entry name" value="CYTB_NTER"/>
    <property type="match status" value="1"/>
</dbReference>
<keyword id="KW-0249">Electron transport</keyword>
<keyword id="KW-0349">Heme</keyword>
<keyword id="KW-0408">Iron</keyword>
<keyword id="KW-0472">Membrane</keyword>
<keyword id="KW-0479">Metal-binding</keyword>
<keyword id="KW-0496">Mitochondrion</keyword>
<keyword id="KW-0999">Mitochondrion inner membrane</keyword>
<keyword id="KW-0679">Respiratory chain</keyword>
<keyword id="KW-0812">Transmembrane</keyword>
<keyword id="KW-1133">Transmembrane helix</keyword>
<keyword id="KW-0813">Transport</keyword>
<keyword id="KW-0830">Ubiquinone</keyword>
<name>CYB_SCHOT</name>